<proteinExistence type="predicted"/>
<accession>Q09721</accession>
<keyword id="KW-1185">Reference proteome</keyword>
<dbReference type="EMBL" id="CU329670">
    <property type="protein sequence ID" value="CAA90468.2"/>
    <property type="molecule type" value="Genomic_DNA"/>
</dbReference>
<dbReference type="PIR" id="S58104">
    <property type="entry name" value="S58104"/>
</dbReference>
<dbReference type="PIR" id="T38608">
    <property type="entry name" value="T38608"/>
</dbReference>
<dbReference type="RefSeq" id="NP_592922.1">
    <property type="nucleotide sequence ID" value="NM_001018323.2"/>
</dbReference>
<dbReference type="SMR" id="Q09721"/>
<dbReference type="FunCoup" id="Q09721">
    <property type="interactions" value="199"/>
</dbReference>
<dbReference type="SwissPalm" id="Q09721"/>
<dbReference type="PaxDb" id="4896-SPAC31A2.10.1"/>
<dbReference type="EnsemblFungi" id="SPAC31A2.10.1">
    <property type="protein sequence ID" value="SPAC31A2.10.1:pep"/>
    <property type="gene ID" value="SPAC31A2.10"/>
</dbReference>
<dbReference type="KEGG" id="spo:2543083"/>
<dbReference type="PomBase" id="SPAC31A2.10"/>
<dbReference type="VEuPathDB" id="FungiDB:SPAC31A2.10"/>
<dbReference type="eggNOG" id="ENOG502R7I3">
    <property type="taxonomic scope" value="Eukaryota"/>
</dbReference>
<dbReference type="HOGENOM" id="CLU_014536_0_0_1"/>
<dbReference type="InParanoid" id="Q09721"/>
<dbReference type="OMA" id="WDPYNES"/>
<dbReference type="PhylomeDB" id="Q09721"/>
<dbReference type="PRO" id="PR:Q09721"/>
<dbReference type="Proteomes" id="UP000002485">
    <property type="component" value="Chromosome I"/>
</dbReference>
<dbReference type="GO" id="GO:0005737">
    <property type="term" value="C:cytoplasm"/>
    <property type="evidence" value="ECO:0000318"/>
    <property type="project" value="GO_Central"/>
</dbReference>
<dbReference type="GO" id="GO:0005829">
    <property type="term" value="C:cytosol"/>
    <property type="evidence" value="ECO:0007005"/>
    <property type="project" value="PomBase"/>
</dbReference>
<dbReference type="GO" id="GO:0005634">
    <property type="term" value="C:nucleus"/>
    <property type="evidence" value="ECO:0000318"/>
    <property type="project" value="GO_Central"/>
</dbReference>
<dbReference type="GO" id="GO:0005525">
    <property type="term" value="F:GTP binding"/>
    <property type="evidence" value="ECO:0000255"/>
    <property type="project" value="PomBase"/>
</dbReference>
<dbReference type="GO" id="GO:0030695">
    <property type="term" value="F:GTPase regulator activity"/>
    <property type="evidence" value="ECO:0000318"/>
    <property type="project" value="GO_Central"/>
</dbReference>
<dbReference type="InterPro" id="IPR008812">
    <property type="entry name" value="Ran_GTP-bd-rel"/>
</dbReference>
<dbReference type="PANTHER" id="PTHR31010:SF2">
    <property type="entry name" value="RAN-SPECIFIC GTPASE-ACTIVATING PROTEIN 30"/>
    <property type="match status" value="1"/>
</dbReference>
<dbReference type="PANTHER" id="PTHR31010">
    <property type="entry name" value="RAN-SPECIFIC GTPASE-ACTIVATING PROTEIN 30-RELATED"/>
    <property type="match status" value="1"/>
</dbReference>
<dbReference type="Pfam" id="PF05508">
    <property type="entry name" value="Ran-binding"/>
    <property type="match status" value="1"/>
</dbReference>
<name>YA4A_SCHPO</name>
<feature type="chain" id="PRO_0000116392" description="Uncharacterized protein C31A2.10">
    <location>
        <begin position="1"/>
        <end position="460"/>
    </location>
</feature>
<sequence length="460" mass="51351">MDQVLSKVTTTAATYATAYAVRTGLQLAGSLVAKRFSKYIQTSAPKSSQFNLELVKSRLEQKIQAITPAVDLIQLVAARGNSSLQNLVPLIIRLRDHIDDFLEFIDYEASGSEKKSPEKADEASEKIFRRCEVLLREIEETIPLINLSLTTAGITLNTALSNTISPSRLLQAQCFLELSDKRFEESHTEIQIGPKFTVVLYTSFSQPSKSDGPLDVRWQETFAKSDLYIKRVVSASQKFSYVICIDEDLNDGRYHEETVGKPTSAPVFGKKLEISLQRMSLLCYTVSGRLLNISQAKSPVLALQLTSIKDVSALDKAHQDNSEDLNNPFIKNNDKTKFHQNIDWIALEKYFEVNALDISDSESEDLSDILSDSEFSIGNRNKNIGNNEYSAQISSDPAEEEIANAMHSLKLEPETSIYLTNPGSLSLLEYLLRLCSLQELHQISCLEMTDSQLAAMLNSN</sequence>
<gene>
    <name type="ORF">SPAC31A2.10</name>
</gene>
<comment type="similarity">
    <text evidence="1">To yeast YGL164c.</text>
</comment>
<protein>
    <recommendedName>
        <fullName>Uncharacterized protein C31A2.10</fullName>
    </recommendedName>
</protein>
<organism>
    <name type="scientific">Schizosaccharomyces pombe (strain 972 / ATCC 24843)</name>
    <name type="common">Fission yeast</name>
    <dbReference type="NCBI Taxonomy" id="284812"/>
    <lineage>
        <taxon>Eukaryota</taxon>
        <taxon>Fungi</taxon>
        <taxon>Dikarya</taxon>
        <taxon>Ascomycota</taxon>
        <taxon>Taphrinomycotina</taxon>
        <taxon>Schizosaccharomycetes</taxon>
        <taxon>Schizosaccharomycetales</taxon>
        <taxon>Schizosaccharomycetaceae</taxon>
        <taxon>Schizosaccharomyces</taxon>
    </lineage>
</organism>
<evidence type="ECO:0000305" key="1"/>
<reference key="1">
    <citation type="journal article" date="2002" name="Nature">
        <title>The genome sequence of Schizosaccharomyces pombe.</title>
        <authorList>
            <person name="Wood V."/>
            <person name="Gwilliam R."/>
            <person name="Rajandream M.A."/>
            <person name="Lyne M.H."/>
            <person name="Lyne R."/>
            <person name="Stewart A."/>
            <person name="Sgouros J.G."/>
            <person name="Peat N."/>
            <person name="Hayles J."/>
            <person name="Baker S.G."/>
            <person name="Basham D."/>
            <person name="Bowman S."/>
            <person name="Brooks K."/>
            <person name="Brown D."/>
            <person name="Brown S."/>
            <person name="Chillingworth T."/>
            <person name="Churcher C.M."/>
            <person name="Collins M."/>
            <person name="Connor R."/>
            <person name="Cronin A."/>
            <person name="Davis P."/>
            <person name="Feltwell T."/>
            <person name="Fraser A."/>
            <person name="Gentles S."/>
            <person name="Goble A."/>
            <person name="Hamlin N."/>
            <person name="Harris D.E."/>
            <person name="Hidalgo J."/>
            <person name="Hodgson G."/>
            <person name="Holroyd S."/>
            <person name="Hornsby T."/>
            <person name="Howarth S."/>
            <person name="Huckle E.J."/>
            <person name="Hunt S."/>
            <person name="Jagels K."/>
            <person name="James K.D."/>
            <person name="Jones L."/>
            <person name="Jones M."/>
            <person name="Leather S."/>
            <person name="McDonald S."/>
            <person name="McLean J."/>
            <person name="Mooney P."/>
            <person name="Moule S."/>
            <person name="Mungall K.L."/>
            <person name="Murphy L.D."/>
            <person name="Niblett D."/>
            <person name="Odell C."/>
            <person name="Oliver K."/>
            <person name="O'Neil S."/>
            <person name="Pearson D."/>
            <person name="Quail M.A."/>
            <person name="Rabbinowitsch E."/>
            <person name="Rutherford K.M."/>
            <person name="Rutter S."/>
            <person name="Saunders D."/>
            <person name="Seeger K."/>
            <person name="Sharp S."/>
            <person name="Skelton J."/>
            <person name="Simmonds M.N."/>
            <person name="Squares R."/>
            <person name="Squares S."/>
            <person name="Stevens K."/>
            <person name="Taylor K."/>
            <person name="Taylor R.G."/>
            <person name="Tivey A."/>
            <person name="Walsh S.V."/>
            <person name="Warren T."/>
            <person name="Whitehead S."/>
            <person name="Woodward J.R."/>
            <person name="Volckaert G."/>
            <person name="Aert R."/>
            <person name="Robben J."/>
            <person name="Grymonprez B."/>
            <person name="Weltjens I."/>
            <person name="Vanstreels E."/>
            <person name="Rieger M."/>
            <person name="Schaefer M."/>
            <person name="Mueller-Auer S."/>
            <person name="Gabel C."/>
            <person name="Fuchs M."/>
            <person name="Duesterhoeft A."/>
            <person name="Fritzc C."/>
            <person name="Holzer E."/>
            <person name="Moestl D."/>
            <person name="Hilbert H."/>
            <person name="Borzym K."/>
            <person name="Langer I."/>
            <person name="Beck A."/>
            <person name="Lehrach H."/>
            <person name="Reinhardt R."/>
            <person name="Pohl T.M."/>
            <person name="Eger P."/>
            <person name="Zimmermann W."/>
            <person name="Wedler H."/>
            <person name="Wambutt R."/>
            <person name="Purnelle B."/>
            <person name="Goffeau A."/>
            <person name="Cadieu E."/>
            <person name="Dreano S."/>
            <person name="Gloux S."/>
            <person name="Lelaure V."/>
            <person name="Mottier S."/>
            <person name="Galibert F."/>
            <person name="Aves S.J."/>
            <person name="Xiang Z."/>
            <person name="Hunt C."/>
            <person name="Moore K."/>
            <person name="Hurst S.M."/>
            <person name="Lucas M."/>
            <person name="Rochet M."/>
            <person name="Gaillardin C."/>
            <person name="Tallada V.A."/>
            <person name="Garzon A."/>
            <person name="Thode G."/>
            <person name="Daga R.R."/>
            <person name="Cruzado L."/>
            <person name="Jimenez J."/>
            <person name="Sanchez M."/>
            <person name="del Rey F."/>
            <person name="Benito J."/>
            <person name="Dominguez A."/>
            <person name="Revuelta J.L."/>
            <person name="Moreno S."/>
            <person name="Armstrong J."/>
            <person name="Forsburg S.L."/>
            <person name="Cerutti L."/>
            <person name="Lowe T."/>
            <person name="McCombie W.R."/>
            <person name="Paulsen I."/>
            <person name="Potashkin J."/>
            <person name="Shpakovski G.V."/>
            <person name="Ussery D."/>
            <person name="Barrell B.G."/>
            <person name="Nurse P."/>
        </authorList>
    </citation>
    <scope>NUCLEOTIDE SEQUENCE [LARGE SCALE GENOMIC DNA]</scope>
    <source>
        <strain>972 / ATCC 24843</strain>
    </source>
</reference>